<keyword id="KW-0014">AIDS</keyword>
<keyword id="KW-0053">Apoptosis</keyword>
<keyword id="KW-1043">Host membrane</keyword>
<keyword id="KW-0945">Host-virus interaction</keyword>
<keyword id="KW-0407">Ion channel</keyword>
<keyword id="KW-0406">Ion transport</keyword>
<keyword id="KW-0472">Membrane</keyword>
<keyword id="KW-0597">Phosphoprotein</keyword>
<keyword id="KW-1185">Reference proteome</keyword>
<keyword id="KW-0812">Transmembrane</keyword>
<keyword id="KW-1133">Transmembrane helix</keyword>
<keyword id="KW-0813">Transport</keyword>
<reference key="1">
    <citation type="journal article" date="2003" name="J. Virol.">
        <title>Amplification of a complete simian immunodeficiency virus genome from fecal RNA of a wild chimpanzee.</title>
        <authorList>
            <person name="Santiago M.L."/>
            <person name="Bibollet-Ruche F."/>
            <person name="Bailes E."/>
            <person name="Kamenya S."/>
            <person name="Muller M.N."/>
            <person name="Lukasik M."/>
            <person name="Pusey A.E."/>
            <person name="Collins D.A."/>
            <person name="Wrangham R.W."/>
            <person name="Goodall J."/>
            <person name="Shaw G.M."/>
            <person name="Sharp P.M."/>
            <person name="Hahn B.H."/>
        </authorList>
    </citation>
    <scope>NUCLEOTIDE SEQUENCE [GENOMIC RNA]</scope>
</reference>
<proteinExistence type="inferred from homology"/>
<accession>Q8AIH6</accession>
<evidence type="ECO:0000250" key="1"/>
<evidence type="ECO:0000255" key="2"/>
<comment type="function">
    <text evidence="1">Enhances virion budding, by targeting human CD4 and Tetherin/BST2 to proteasome degradation. Degradation of CD4 prevents any unwanted premature interactions between viral Env and its receptor human CD4 in the endoplasmic reticulum. Degradation of antiretroviral protein Tetherin/BST2 is important for virion budding, as BST2 tethers new viral particles to the host cell membrane. Mechanistically, Vpu bridges either CD4 or BST2 to BTRC, a substrate recognition subunit of the Skp1/Cullin/F-box protein E3 ubiquitin ligase, induces their ubiquitination and subsequent proteasomal degradation. The alteration of the E3 ligase specificity by Vpu seems to interfere with the degradation of host IKBKB, leading to NF-kappa-B down-regulation and subsequent apoptosis. Acts as a viroporin that forms an oligomeric ion channel in membranes. Modulates the host DNA repair mechanisms to promote degradation of nuclear viral cDNA in cells that are already productively infected in order to suppress immune sensing and proviral hyper-integration (superinfection). Manipulates PML-NBs and modulates SUMOylation of host BLM protein thereby enhancing its DNA-end processing activity toward viral unintegrated linear DNA. Also inhibits RAD52-mediated homologous repair of viral cDNA, preventing the generation of dead-end circular forms of single copies of the long terminal repeat and permitting sustained nucleolytic attack.</text>
</comment>
<comment type="activity regulation">
    <text evidence="1">Ion channel activity is inhibited by hexamethylene amiloride in vitro.</text>
</comment>
<comment type="subunit">
    <text evidence="1">Homopentamer. Interacts with host CD4 and BRTC; these interactions induce proteasomal degradation of CD4. Interacts with host BST2; this interaction leads to the degradation of host BST2. Interacts with host FBXW11. Interacts with host AP1M1; this interaction plays a role in the mistrafficking and subsequent degradation of host BST2. Interacts with host RANBP2; this interaction allows Vpu to down-regulate host BLM sumoylation.</text>
</comment>
<comment type="subcellular location">
    <subcellularLocation>
        <location evidence="1">Host membrane</location>
        <topology evidence="1">Single-pass type I membrane protein</topology>
    </subcellularLocation>
</comment>
<comment type="domain">
    <text evidence="1">The N-terminus and transmembrane domains are required for self-oligomerization and proper virion budding, whereas the cytoplasmic domain is required for CD4 degradation. The cytoplasmic domain is composed of 2 amphipathic alpha helix that form a U-shape.</text>
</comment>
<comment type="PTM">
    <text evidence="1">Phosphorylated by host CK2. This phosphorylation is necessary for interaction with host BRCP and degradation of CD4, but not for enhancement of virion budding (By similarity).</text>
</comment>
<organism>
    <name type="scientific">Simian immunodeficiency virus (isolate TAN1)</name>
    <name type="common">SIV-cpz</name>
    <name type="synonym">Chimpanzee immunodeficiency virus</name>
    <dbReference type="NCBI Taxonomy" id="388910"/>
    <lineage>
        <taxon>Viruses</taxon>
        <taxon>Riboviria</taxon>
        <taxon>Pararnavirae</taxon>
        <taxon>Artverviricota</taxon>
        <taxon>Revtraviricetes</taxon>
        <taxon>Ortervirales</taxon>
        <taxon>Retroviridae</taxon>
        <taxon>Orthoretrovirinae</taxon>
        <taxon>Lentivirus</taxon>
        <taxon>Simian immunodeficiency virus</taxon>
    </lineage>
</organism>
<dbReference type="EMBL" id="AF447763">
    <property type="protein sequence ID" value="AAO13965.1"/>
    <property type="molecule type" value="Genomic_RNA"/>
</dbReference>
<dbReference type="SMR" id="Q8AIH6"/>
<dbReference type="Proteomes" id="UP000007222">
    <property type="component" value="Segment"/>
</dbReference>
<dbReference type="GO" id="GO:0033644">
    <property type="term" value="C:host cell membrane"/>
    <property type="evidence" value="ECO:0007669"/>
    <property type="project" value="UniProtKB-SubCell"/>
</dbReference>
<dbReference type="GO" id="GO:0016020">
    <property type="term" value="C:membrane"/>
    <property type="evidence" value="ECO:0007669"/>
    <property type="project" value="UniProtKB-KW"/>
</dbReference>
<dbReference type="GO" id="GO:0034220">
    <property type="term" value="P:monoatomic ion transmembrane transport"/>
    <property type="evidence" value="ECO:0007669"/>
    <property type="project" value="UniProtKB-KW"/>
</dbReference>
<name>VPU_SIVTN</name>
<sequence length="83" mass="9580">MIKIVVGSVSTNVIGILCILLILIGGGLLIGIGIRRELERERQHQRVLERLARRLSIDSGVEEDEEFNWNNFDPHNYNPRDWI</sequence>
<organismHost>
    <name type="scientific">Pan troglodytes</name>
    <name type="common">Chimpanzee</name>
    <dbReference type="NCBI Taxonomy" id="9598"/>
</organismHost>
<feature type="chain" id="PRO_0000248296" description="Protein Vpu">
    <location>
        <begin position="1"/>
        <end position="83"/>
    </location>
</feature>
<feature type="topological domain" description="Extracellular" evidence="2">
    <location>
        <begin position="1"/>
        <end position="13"/>
    </location>
</feature>
<feature type="transmembrane region" description="Helical" evidence="2">
    <location>
        <begin position="14"/>
        <end position="34"/>
    </location>
</feature>
<feature type="topological domain" description="Cytoplasmic" evidence="2">
    <location>
        <begin position="35"/>
        <end position="83"/>
    </location>
</feature>
<feature type="modified residue" description="Phosphoserine; by host CK2" evidence="1">
    <location>
        <position position="59"/>
    </location>
</feature>
<gene>
    <name type="primary">vpu</name>
</gene>
<protein>
    <recommendedName>
        <fullName>Protein Vpu</fullName>
    </recommendedName>
    <alternativeName>
        <fullName>U ORF protein</fullName>
    </alternativeName>
    <alternativeName>
        <fullName>Viral protein U</fullName>
    </alternativeName>
</protein>